<keyword id="KW-0028">Amino-acid biosynthesis</keyword>
<keyword id="KW-0100">Branched-chain amino acid biosynthesis</keyword>
<keyword id="KW-0963">Cytoplasm</keyword>
<keyword id="KW-0432">Leucine biosynthesis</keyword>
<keyword id="KW-0464">Manganese</keyword>
<keyword id="KW-0479">Metal-binding</keyword>
<keyword id="KW-1185">Reference proteome</keyword>
<keyword id="KW-0808">Transferase</keyword>
<proteinExistence type="inferred from homology"/>
<gene>
    <name evidence="1" type="primary">leuA</name>
    <name type="ordered locus">Tbd_1986</name>
</gene>
<protein>
    <recommendedName>
        <fullName evidence="1">2-isopropylmalate synthase</fullName>
        <ecNumber evidence="1">2.3.3.13</ecNumber>
    </recommendedName>
    <alternativeName>
        <fullName evidence="1">Alpha-IPM synthase</fullName>
    </alternativeName>
    <alternativeName>
        <fullName evidence="1">Alpha-isopropylmalate synthase</fullName>
    </alternativeName>
</protein>
<dbReference type="EC" id="2.3.3.13" evidence="1"/>
<dbReference type="EMBL" id="CP000116">
    <property type="protein sequence ID" value="AAZ97939.1"/>
    <property type="molecule type" value="Genomic_DNA"/>
</dbReference>
<dbReference type="RefSeq" id="WP_011312498.1">
    <property type="nucleotide sequence ID" value="NC_007404.1"/>
</dbReference>
<dbReference type="SMR" id="Q3SHE7"/>
<dbReference type="STRING" id="292415.Tbd_1986"/>
<dbReference type="KEGG" id="tbd:Tbd_1986"/>
<dbReference type="eggNOG" id="COG0119">
    <property type="taxonomic scope" value="Bacteria"/>
</dbReference>
<dbReference type="HOGENOM" id="CLU_022158_0_1_4"/>
<dbReference type="OrthoDB" id="9803573at2"/>
<dbReference type="UniPathway" id="UPA00048">
    <property type="reaction ID" value="UER00070"/>
</dbReference>
<dbReference type="Proteomes" id="UP000008291">
    <property type="component" value="Chromosome"/>
</dbReference>
<dbReference type="GO" id="GO:0005829">
    <property type="term" value="C:cytosol"/>
    <property type="evidence" value="ECO:0007669"/>
    <property type="project" value="TreeGrafter"/>
</dbReference>
<dbReference type="GO" id="GO:0003852">
    <property type="term" value="F:2-isopropylmalate synthase activity"/>
    <property type="evidence" value="ECO:0007669"/>
    <property type="project" value="UniProtKB-UniRule"/>
</dbReference>
<dbReference type="GO" id="GO:0003985">
    <property type="term" value="F:acetyl-CoA C-acetyltransferase activity"/>
    <property type="evidence" value="ECO:0007669"/>
    <property type="project" value="UniProtKB-UniRule"/>
</dbReference>
<dbReference type="GO" id="GO:0030145">
    <property type="term" value="F:manganese ion binding"/>
    <property type="evidence" value="ECO:0007669"/>
    <property type="project" value="UniProtKB-UniRule"/>
</dbReference>
<dbReference type="GO" id="GO:0009098">
    <property type="term" value="P:L-leucine biosynthetic process"/>
    <property type="evidence" value="ECO:0007669"/>
    <property type="project" value="UniProtKB-UniRule"/>
</dbReference>
<dbReference type="CDD" id="cd07940">
    <property type="entry name" value="DRE_TIM_IPMS"/>
    <property type="match status" value="1"/>
</dbReference>
<dbReference type="FunFam" id="1.10.238.260:FF:000001">
    <property type="entry name" value="2-isopropylmalate synthase"/>
    <property type="match status" value="1"/>
</dbReference>
<dbReference type="FunFam" id="3.20.20.70:FF:000010">
    <property type="entry name" value="2-isopropylmalate synthase"/>
    <property type="match status" value="1"/>
</dbReference>
<dbReference type="FunFam" id="3.30.160.270:FF:000003">
    <property type="entry name" value="2-isopropylmalate synthase"/>
    <property type="match status" value="1"/>
</dbReference>
<dbReference type="Gene3D" id="1.10.238.260">
    <property type="match status" value="1"/>
</dbReference>
<dbReference type="Gene3D" id="3.30.160.270">
    <property type="match status" value="1"/>
</dbReference>
<dbReference type="Gene3D" id="3.20.20.70">
    <property type="entry name" value="Aldolase class I"/>
    <property type="match status" value="1"/>
</dbReference>
<dbReference type="HAMAP" id="MF_01025">
    <property type="entry name" value="LeuA_type1"/>
    <property type="match status" value="1"/>
</dbReference>
<dbReference type="InterPro" id="IPR050073">
    <property type="entry name" value="2-IPM_HCS-like"/>
</dbReference>
<dbReference type="InterPro" id="IPR013709">
    <property type="entry name" value="2-isopropylmalate_synth_dimer"/>
</dbReference>
<dbReference type="InterPro" id="IPR002034">
    <property type="entry name" value="AIPM/Hcit_synth_CS"/>
</dbReference>
<dbReference type="InterPro" id="IPR013785">
    <property type="entry name" value="Aldolase_TIM"/>
</dbReference>
<dbReference type="InterPro" id="IPR054691">
    <property type="entry name" value="LeuA/HCS_post-cat"/>
</dbReference>
<dbReference type="InterPro" id="IPR036230">
    <property type="entry name" value="LeuA_allosteric_dom_sf"/>
</dbReference>
<dbReference type="InterPro" id="IPR005671">
    <property type="entry name" value="LeuA_bact_synth"/>
</dbReference>
<dbReference type="InterPro" id="IPR000891">
    <property type="entry name" value="PYR_CT"/>
</dbReference>
<dbReference type="NCBIfam" id="TIGR00973">
    <property type="entry name" value="leuA_bact"/>
    <property type="match status" value="1"/>
</dbReference>
<dbReference type="NCBIfam" id="NF002086">
    <property type="entry name" value="PRK00915.1-3"/>
    <property type="match status" value="1"/>
</dbReference>
<dbReference type="NCBIfam" id="NF002087">
    <property type="entry name" value="PRK00915.1-4"/>
    <property type="match status" value="1"/>
</dbReference>
<dbReference type="PANTHER" id="PTHR10277:SF9">
    <property type="entry name" value="2-ISOPROPYLMALATE SYNTHASE 1, CHLOROPLASTIC-RELATED"/>
    <property type="match status" value="1"/>
</dbReference>
<dbReference type="PANTHER" id="PTHR10277">
    <property type="entry name" value="HOMOCITRATE SYNTHASE-RELATED"/>
    <property type="match status" value="1"/>
</dbReference>
<dbReference type="Pfam" id="PF22617">
    <property type="entry name" value="HCS_D2"/>
    <property type="match status" value="1"/>
</dbReference>
<dbReference type="Pfam" id="PF00682">
    <property type="entry name" value="HMGL-like"/>
    <property type="match status" value="1"/>
</dbReference>
<dbReference type="Pfam" id="PF08502">
    <property type="entry name" value="LeuA_dimer"/>
    <property type="match status" value="1"/>
</dbReference>
<dbReference type="SMART" id="SM00917">
    <property type="entry name" value="LeuA_dimer"/>
    <property type="match status" value="1"/>
</dbReference>
<dbReference type="SUPFAM" id="SSF110921">
    <property type="entry name" value="2-isopropylmalate synthase LeuA, allosteric (dimerisation) domain"/>
    <property type="match status" value="1"/>
</dbReference>
<dbReference type="SUPFAM" id="SSF51569">
    <property type="entry name" value="Aldolase"/>
    <property type="match status" value="1"/>
</dbReference>
<dbReference type="PROSITE" id="PS00815">
    <property type="entry name" value="AIPM_HOMOCIT_SYNTH_1"/>
    <property type="match status" value="1"/>
</dbReference>
<dbReference type="PROSITE" id="PS00816">
    <property type="entry name" value="AIPM_HOMOCIT_SYNTH_2"/>
    <property type="match status" value="1"/>
</dbReference>
<dbReference type="PROSITE" id="PS50991">
    <property type="entry name" value="PYR_CT"/>
    <property type="match status" value="1"/>
</dbReference>
<evidence type="ECO:0000255" key="1">
    <source>
        <dbReference type="HAMAP-Rule" id="MF_01025"/>
    </source>
</evidence>
<organism>
    <name type="scientific">Thiobacillus denitrificans (strain ATCC 25259 / T1)</name>
    <dbReference type="NCBI Taxonomy" id="292415"/>
    <lineage>
        <taxon>Bacteria</taxon>
        <taxon>Pseudomonadati</taxon>
        <taxon>Pseudomonadota</taxon>
        <taxon>Betaproteobacteria</taxon>
        <taxon>Nitrosomonadales</taxon>
        <taxon>Thiobacillaceae</taxon>
        <taxon>Thiobacillus</taxon>
    </lineage>
</organism>
<reference key="1">
    <citation type="journal article" date="2006" name="J. Bacteriol.">
        <title>The genome sequence of the obligately chemolithoautotrophic, facultatively anaerobic bacterium Thiobacillus denitrificans.</title>
        <authorList>
            <person name="Beller H.R."/>
            <person name="Chain P.S."/>
            <person name="Letain T.E."/>
            <person name="Chakicherla A."/>
            <person name="Larimer F.W."/>
            <person name="Richardson P.M."/>
            <person name="Coleman M.A."/>
            <person name="Wood A.P."/>
            <person name="Kelly D.P."/>
        </authorList>
    </citation>
    <scope>NUCLEOTIDE SEQUENCE [LARGE SCALE GENOMIC DNA]</scope>
    <source>
        <strain>ATCC 25259 / T1</strain>
    </source>
</reference>
<comment type="function">
    <text evidence="1">Catalyzes the condensation of the acetyl group of acetyl-CoA with 3-methyl-2-oxobutanoate (2-ketoisovalerate) to form 3-carboxy-3-hydroxy-4-methylpentanoate (2-isopropylmalate).</text>
</comment>
<comment type="catalytic activity">
    <reaction evidence="1">
        <text>3-methyl-2-oxobutanoate + acetyl-CoA + H2O = (2S)-2-isopropylmalate + CoA + H(+)</text>
        <dbReference type="Rhea" id="RHEA:21524"/>
        <dbReference type="ChEBI" id="CHEBI:1178"/>
        <dbReference type="ChEBI" id="CHEBI:11851"/>
        <dbReference type="ChEBI" id="CHEBI:15377"/>
        <dbReference type="ChEBI" id="CHEBI:15378"/>
        <dbReference type="ChEBI" id="CHEBI:57287"/>
        <dbReference type="ChEBI" id="CHEBI:57288"/>
        <dbReference type="EC" id="2.3.3.13"/>
    </reaction>
</comment>
<comment type="cofactor">
    <cofactor evidence="1">
        <name>Mn(2+)</name>
        <dbReference type="ChEBI" id="CHEBI:29035"/>
    </cofactor>
</comment>
<comment type="pathway">
    <text evidence="1">Amino-acid biosynthesis; L-leucine biosynthesis; L-leucine from 3-methyl-2-oxobutanoate: step 1/4.</text>
</comment>
<comment type="subunit">
    <text evidence="1">Homodimer.</text>
</comment>
<comment type="subcellular location">
    <subcellularLocation>
        <location evidence="1">Cytoplasm</location>
    </subcellularLocation>
</comment>
<comment type="similarity">
    <text evidence="1">Belongs to the alpha-IPM synthase/homocitrate synthase family. LeuA type 1 subfamily.</text>
</comment>
<sequence length="511" mass="55298">MNDRLFIFDTTLRDGEQSPGASMTKDEKLRIARQLEKLGVDVIEAGFAAASPGDADAIRAIAETVRNSTVCSLARANERDIHAAGGAIKPAKSGRIHTFIATSPIHMEKKLRMQPDQVVEAAVKAVKLAREYTDDVEFSAEDAVRSDMDFLVRIFDEVIKAGAKTINVPDTVGYSIPALWGERMKALIERVPGSDKVIWSTHCHNDLGMAVANSLAAVMNGARQVECTINGLGERAGNASLEEIVMAVRTRRDVFGCDTRIDATQIVPSSKLVSTITGYPVQPNKAIVGANAFAHESGIHQDGVLKHRETYEIMRAEDVGWNANRLTLGKLSGRNAFKTKLAELGIVLDSEEALNAAFARFKDLADKKREIFDEDLQALVSDEGYATEDERFKLLSMKVCSETGEVPRAQLVFTDDGAEKQASGEGSGPVDATFKALESVVHSGADLLLYSVNNITSGTDAQGEVTVRLAQDGRVVNGQGADTDIVVASAKAYLHALNKLHSKRERAHPQV</sequence>
<feature type="chain" id="PRO_1000149323" description="2-isopropylmalate synthase">
    <location>
        <begin position="1"/>
        <end position="511"/>
    </location>
</feature>
<feature type="domain" description="Pyruvate carboxyltransferase" evidence="1">
    <location>
        <begin position="5"/>
        <end position="267"/>
    </location>
</feature>
<feature type="region of interest" description="Regulatory domain" evidence="1">
    <location>
        <begin position="393"/>
        <end position="511"/>
    </location>
</feature>
<feature type="binding site" evidence="1">
    <location>
        <position position="14"/>
    </location>
    <ligand>
        <name>Mn(2+)</name>
        <dbReference type="ChEBI" id="CHEBI:29035"/>
    </ligand>
</feature>
<feature type="binding site" evidence="1">
    <location>
        <position position="202"/>
    </location>
    <ligand>
        <name>Mn(2+)</name>
        <dbReference type="ChEBI" id="CHEBI:29035"/>
    </ligand>
</feature>
<feature type="binding site" evidence="1">
    <location>
        <position position="204"/>
    </location>
    <ligand>
        <name>Mn(2+)</name>
        <dbReference type="ChEBI" id="CHEBI:29035"/>
    </ligand>
</feature>
<feature type="binding site" evidence="1">
    <location>
        <position position="238"/>
    </location>
    <ligand>
        <name>Mn(2+)</name>
        <dbReference type="ChEBI" id="CHEBI:29035"/>
    </ligand>
</feature>
<accession>Q3SHE7</accession>
<name>LEU1_THIDA</name>